<evidence type="ECO:0000255" key="1"/>
<evidence type="ECO:0000255" key="2">
    <source>
        <dbReference type="HAMAP-Rule" id="MF_01036"/>
    </source>
</evidence>
<evidence type="ECO:0000256" key="3">
    <source>
        <dbReference type="SAM" id="MobiDB-lite"/>
    </source>
</evidence>
<sequence length="673" mass="75744">MFQDNPLLAQLKQQIRENIPKKEGVIRASDRGFGFLEVDEKTSYFVPPPYMKKVMHGDRVSALIRTEKEKEVAEPDALLEQSVTRFVARVKMFRDRLNVVADHPLIKDAIKARVKKGLDEKEFKEGDWVVATLKRHALVDGNFSAEITQTIASQEDHNVPWWVVLARHNLAQVEPADLPEWKVIEEEELPRTDLTATPFFTIDGAKTKDMDDALAIRKLDNGWELLVAIADPTAYVAEGSELDKEAAQRAFTVYMPGRNVPMIPRTLSDELCSLKEGEERNTLCARLLIAEDGLLLEETEFFAARISSHARLTYDDVSDWAEHGKQLDIDAGVLAQLPLMKAMTEARIAWRTEHALVFPDRPDYDFELGENGEVLAIHVEPRRIANRMVEESMIAANICAGRVLGKQVGYGIFNVHTGFDEESLDGAIDLLKSAEAPFEKEEIASLSGFCALRRWIDNLDTRWLDGKIRRFQSYALMSAEPGAHYGLGLDAYATWTSPIRKYGDMVNHRLLKAVIAGKTPGERPSLELTEHLTACRRLHRMVERDIGDWLYVRYLKADAGTDKVFNAEIIDVMRAGLKLRLRENGAVVFMPARHILDNKDRLECNWDNGRVYLDKTEVVYELGQIIEVKLTEAVEETRSLIAKPAVELVPGPAPVAPTSEADATPADEAPKAE</sequence>
<organism>
    <name type="scientific">Aeromonas hydrophila subsp. hydrophila (strain ATCC 7966 / DSM 30187 / BCRC 13018 / CCUG 14551 / JCM 1027 / KCTC 2358 / NCIMB 9240 / NCTC 8049)</name>
    <dbReference type="NCBI Taxonomy" id="380703"/>
    <lineage>
        <taxon>Bacteria</taxon>
        <taxon>Pseudomonadati</taxon>
        <taxon>Pseudomonadota</taxon>
        <taxon>Gammaproteobacteria</taxon>
        <taxon>Aeromonadales</taxon>
        <taxon>Aeromonadaceae</taxon>
        <taxon>Aeromonas</taxon>
    </lineage>
</organism>
<name>RNB_AERHH</name>
<comment type="function">
    <text evidence="2">Involved in mRNA degradation. Hydrolyzes single-stranded polyribonucleotides processively in the 3' to 5' direction.</text>
</comment>
<comment type="catalytic activity">
    <reaction evidence="2">
        <text>Exonucleolytic cleavage in the 3'- to 5'-direction to yield nucleoside 5'-phosphates.</text>
        <dbReference type="EC" id="3.1.13.1"/>
    </reaction>
</comment>
<comment type="subcellular location">
    <subcellularLocation>
        <location evidence="2">Cytoplasm</location>
    </subcellularLocation>
</comment>
<comment type="similarity">
    <text evidence="2">Belongs to the RNR ribonuclease family. RNase II subfamily.</text>
</comment>
<dbReference type="EC" id="3.1.13.1" evidence="2"/>
<dbReference type="EMBL" id="CP000462">
    <property type="protein sequence ID" value="ABK38105.1"/>
    <property type="molecule type" value="Genomic_DNA"/>
</dbReference>
<dbReference type="RefSeq" id="WP_011704526.1">
    <property type="nucleotide sequence ID" value="NC_008570.1"/>
</dbReference>
<dbReference type="RefSeq" id="YP_855087.1">
    <property type="nucleotide sequence ID" value="NC_008570.1"/>
</dbReference>
<dbReference type="SMR" id="A0KFR1"/>
<dbReference type="STRING" id="380703.AHA_0554"/>
<dbReference type="EnsemblBacteria" id="ABK38105">
    <property type="protein sequence ID" value="ABK38105"/>
    <property type="gene ID" value="AHA_0554"/>
</dbReference>
<dbReference type="GeneID" id="4488530"/>
<dbReference type="KEGG" id="aha:AHA_0554"/>
<dbReference type="PATRIC" id="fig|380703.7.peg.548"/>
<dbReference type="eggNOG" id="COG4776">
    <property type="taxonomic scope" value="Bacteria"/>
</dbReference>
<dbReference type="HOGENOM" id="CLU_002333_7_3_6"/>
<dbReference type="OrthoDB" id="9764149at2"/>
<dbReference type="Proteomes" id="UP000000756">
    <property type="component" value="Chromosome"/>
</dbReference>
<dbReference type="GO" id="GO:0005829">
    <property type="term" value="C:cytosol"/>
    <property type="evidence" value="ECO:0007669"/>
    <property type="project" value="UniProtKB-ARBA"/>
</dbReference>
<dbReference type="GO" id="GO:0008859">
    <property type="term" value="F:exoribonuclease II activity"/>
    <property type="evidence" value="ECO:0007669"/>
    <property type="project" value="UniProtKB-UniRule"/>
</dbReference>
<dbReference type="GO" id="GO:0003723">
    <property type="term" value="F:RNA binding"/>
    <property type="evidence" value="ECO:0007669"/>
    <property type="project" value="UniProtKB-KW"/>
</dbReference>
<dbReference type="GO" id="GO:0006402">
    <property type="term" value="P:mRNA catabolic process"/>
    <property type="evidence" value="ECO:0007669"/>
    <property type="project" value="UniProtKB-UniRule"/>
</dbReference>
<dbReference type="Gene3D" id="2.40.50.640">
    <property type="match status" value="1"/>
</dbReference>
<dbReference type="Gene3D" id="2.40.50.140">
    <property type="entry name" value="Nucleic acid-binding proteins"/>
    <property type="match status" value="2"/>
</dbReference>
<dbReference type="HAMAP" id="MF_01036">
    <property type="entry name" value="RNase_II"/>
    <property type="match status" value="1"/>
</dbReference>
<dbReference type="InterPro" id="IPR011129">
    <property type="entry name" value="CSD"/>
</dbReference>
<dbReference type="InterPro" id="IPR040476">
    <property type="entry name" value="CSD2"/>
</dbReference>
<dbReference type="InterPro" id="IPR012340">
    <property type="entry name" value="NA-bd_OB-fold"/>
</dbReference>
<dbReference type="InterPro" id="IPR013223">
    <property type="entry name" value="RNase_B_OB_dom"/>
</dbReference>
<dbReference type="InterPro" id="IPR011804">
    <property type="entry name" value="RNase_II"/>
</dbReference>
<dbReference type="InterPro" id="IPR001900">
    <property type="entry name" value="RNase_II/R"/>
</dbReference>
<dbReference type="InterPro" id="IPR022966">
    <property type="entry name" value="RNase_II/R_CS"/>
</dbReference>
<dbReference type="InterPro" id="IPR004476">
    <property type="entry name" value="RNase_II/RNase_R"/>
</dbReference>
<dbReference type="InterPro" id="IPR050180">
    <property type="entry name" value="RNR_Ribonuclease"/>
</dbReference>
<dbReference type="NCBIfam" id="TIGR00358">
    <property type="entry name" value="3_prime_RNase"/>
    <property type="match status" value="1"/>
</dbReference>
<dbReference type="NCBIfam" id="NF003455">
    <property type="entry name" value="PRK05054.1"/>
    <property type="match status" value="1"/>
</dbReference>
<dbReference type="NCBIfam" id="TIGR02062">
    <property type="entry name" value="RNase_B"/>
    <property type="match status" value="1"/>
</dbReference>
<dbReference type="PANTHER" id="PTHR23355:SF37">
    <property type="entry name" value="EXORIBONUCLEASE 2"/>
    <property type="match status" value="1"/>
</dbReference>
<dbReference type="PANTHER" id="PTHR23355">
    <property type="entry name" value="RIBONUCLEASE"/>
    <property type="match status" value="1"/>
</dbReference>
<dbReference type="Pfam" id="PF17876">
    <property type="entry name" value="CSD2"/>
    <property type="match status" value="1"/>
</dbReference>
<dbReference type="Pfam" id="PF08206">
    <property type="entry name" value="OB_RNB"/>
    <property type="match status" value="1"/>
</dbReference>
<dbReference type="Pfam" id="PF00773">
    <property type="entry name" value="RNB"/>
    <property type="match status" value="1"/>
</dbReference>
<dbReference type="SMART" id="SM00357">
    <property type="entry name" value="CSP"/>
    <property type="match status" value="1"/>
</dbReference>
<dbReference type="SMART" id="SM00955">
    <property type="entry name" value="RNB"/>
    <property type="match status" value="1"/>
</dbReference>
<dbReference type="SUPFAM" id="SSF50249">
    <property type="entry name" value="Nucleic acid-binding proteins"/>
    <property type="match status" value="4"/>
</dbReference>
<dbReference type="PROSITE" id="PS01175">
    <property type="entry name" value="RIBONUCLEASE_II"/>
    <property type="match status" value="1"/>
</dbReference>
<accession>A0KFR1</accession>
<feature type="chain" id="PRO_0000409532" description="Exoribonuclease 2">
    <location>
        <begin position="1"/>
        <end position="673"/>
    </location>
</feature>
<feature type="domain" description="RNB" evidence="1">
    <location>
        <begin position="191"/>
        <end position="516"/>
    </location>
</feature>
<feature type="domain" description="S1 motif" evidence="2">
    <location>
        <begin position="562"/>
        <end position="645"/>
    </location>
</feature>
<feature type="region of interest" description="Disordered" evidence="3">
    <location>
        <begin position="650"/>
        <end position="673"/>
    </location>
</feature>
<reference key="1">
    <citation type="journal article" date="2006" name="J. Bacteriol.">
        <title>Genome sequence of Aeromonas hydrophila ATCC 7966T: jack of all trades.</title>
        <authorList>
            <person name="Seshadri R."/>
            <person name="Joseph S.W."/>
            <person name="Chopra A.K."/>
            <person name="Sha J."/>
            <person name="Shaw J."/>
            <person name="Graf J."/>
            <person name="Haft D.H."/>
            <person name="Wu M."/>
            <person name="Ren Q."/>
            <person name="Rosovitz M.J."/>
            <person name="Madupu R."/>
            <person name="Tallon L."/>
            <person name="Kim M."/>
            <person name="Jin S."/>
            <person name="Vuong H."/>
            <person name="Stine O.C."/>
            <person name="Ali A."/>
            <person name="Horneman A.J."/>
            <person name="Heidelberg J.F."/>
        </authorList>
    </citation>
    <scope>NUCLEOTIDE SEQUENCE [LARGE SCALE GENOMIC DNA]</scope>
    <source>
        <strain>ATCC 7966 / DSM 30187 / BCRC 13018 / CCUG 14551 / JCM 1027 / KCTC 2358 / NCIMB 9240 / NCTC 8049</strain>
    </source>
</reference>
<protein>
    <recommendedName>
        <fullName evidence="2">Exoribonuclease 2</fullName>
        <ecNumber evidence="2">3.1.13.1</ecNumber>
    </recommendedName>
    <alternativeName>
        <fullName evidence="2">Exoribonuclease II</fullName>
        <shortName evidence="2">RNase II</shortName>
        <shortName evidence="2">Ribonuclease II</shortName>
    </alternativeName>
</protein>
<gene>
    <name evidence="2" type="primary">rnb</name>
    <name type="ordered locus">AHA_0554</name>
</gene>
<keyword id="KW-0963">Cytoplasm</keyword>
<keyword id="KW-0269">Exonuclease</keyword>
<keyword id="KW-0378">Hydrolase</keyword>
<keyword id="KW-0540">Nuclease</keyword>
<keyword id="KW-1185">Reference proteome</keyword>
<keyword id="KW-0694">RNA-binding</keyword>
<proteinExistence type="inferred from homology"/>